<proteinExistence type="inferred from homology"/>
<reference key="1">
    <citation type="journal article" date="2009" name="PLoS ONE">
        <title>Genome degradation in Brucella ovis corresponds with narrowing of its host range and tissue tropism.</title>
        <authorList>
            <person name="Tsolis R.M."/>
            <person name="Seshadri R."/>
            <person name="Santos R.L."/>
            <person name="Sangari F.J."/>
            <person name="Lobo J.M."/>
            <person name="de Jong M.F."/>
            <person name="Ren Q."/>
            <person name="Myers G."/>
            <person name="Brinkac L.M."/>
            <person name="Nelson W.C."/>
            <person name="Deboy R.T."/>
            <person name="Angiuoli S."/>
            <person name="Khouri H."/>
            <person name="Dimitrov G."/>
            <person name="Robinson J.R."/>
            <person name="Mulligan S."/>
            <person name="Walker R.L."/>
            <person name="Elzer P.E."/>
            <person name="Hassan K.A."/>
            <person name="Paulsen I.T."/>
        </authorList>
    </citation>
    <scope>NUCLEOTIDE SEQUENCE [LARGE SCALE GENOMIC DNA]</scope>
    <source>
        <strain>ATCC 25840 / 63/290 / NCTC 10512</strain>
    </source>
</reference>
<feature type="chain" id="PRO_0000386764" description="Ribosomal RNA small subunit methyltransferase H">
    <location>
        <begin position="1"/>
        <end position="346"/>
    </location>
</feature>
<feature type="region of interest" description="Disordered" evidence="2">
    <location>
        <begin position="270"/>
        <end position="327"/>
    </location>
</feature>
<feature type="binding site" evidence="1">
    <location>
        <begin position="46"/>
        <end position="48"/>
    </location>
    <ligand>
        <name>S-adenosyl-L-methionine</name>
        <dbReference type="ChEBI" id="CHEBI:59789"/>
    </ligand>
</feature>
<feature type="binding site" evidence="1">
    <location>
        <position position="63"/>
    </location>
    <ligand>
        <name>S-adenosyl-L-methionine</name>
        <dbReference type="ChEBI" id="CHEBI:59789"/>
    </ligand>
</feature>
<feature type="binding site" evidence="1">
    <location>
        <position position="90"/>
    </location>
    <ligand>
        <name>S-adenosyl-L-methionine</name>
        <dbReference type="ChEBI" id="CHEBI:59789"/>
    </ligand>
</feature>
<feature type="binding site" evidence="1">
    <location>
        <position position="113"/>
    </location>
    <ligand>
        <name>S-adenosyl-L-methionine</name>
        <dbReference type="ChEBI" id="CHEBI:59789"/>
    </ligand>
</feature>
<feature type="binding site" evidence="1">
    <location>
        <position position="120"/>
    </location>
    <ligand>
        <name>S-adenosyl-L-methionine</name>
        <dbReference type="ChEBI" id="CHEBI:59789"/>
    </ligand>
</feature>
<protein>
    <recommendedName>
        <fullName evidence="1">Ribosomal RNA small subunit methyltransferase H</fullName>
        <ecNumber evidence="1">2.1.1.199</ecNumber>
    </recommendedName>
    <alternativeName>
        <fullName evidence="1">16S rRNA m(4)C1402 methyltransferase</fullName>
    </alternativeName>
    <alternativeName>
        <fullName evidence="1">rRNA (cytosine-N(4)-)-methyltransferase RsmH</fullName>
    </alternativeName>
</protein>
<evidence type="ECO:0000255" key="1">
    <source>
        <dbReference type="HAMAP-Rule" id="MF_01007"/>
    </source>
</evidence>
<evidence type="ECO:0000256" key="2">
    <source>
        <dbReference type="SAM" id="MobiDB-lite"/>
    </source>
</evidence>
<sequence length="346" mass="37482">MASLGGDNSQAEGAEVRHVPVLIAEVIDALKPAPGAVIVDGTFGAGGYTRRILETGADVIAIDRDPTAIEAGRAMEKEFPGRLNLVESRFSALDEAVARMSGAGKKVDGVVLDIGVSSMQIDEAERGFSFQKDGPLDMRMSSRGSSAADAVNRLKTGDLARIFNFLGEERHAGRIARMIEKRRAAKPFTRTLDLANAIETLVGRNPKDRIHPATRVFQALRVYVNDELGELARALLAAERILKPGGRLVVVTFHSLEDRMVKRFFADRAGGSAGSRHMPETHMRLPSFTPAVKGAVGPTPEEEERNPRARSAKLRAGIRTENSPLEDDLSLFGLPKLPETNELARS</sequence>
<accession>A5VRI5</accession>
<organism>
    <name type="scientific">Brucella ovis (strain ATCC 25840 / 63/290 / NCTC 10512)</name>
    <dbReference type="NCBI Taxonomy" id="444178"/>
    <lineage>
        <taxon>Bacteria</taxon>
        <taxon>Pseudomonadati</taxon>
        <taxon>Pseudomonadota</taxon>
        <taxon>Alphaproteobacteria</taxon>
        <taxon>Hyphomicrobiales</taxon>
        <taxon>Brucellaceae</taxon>
        <taxon>Brucella/Ochrobactrum group</taxon>
        <taxon>Brucella</taxon>
    </lineage>
</organism>
<keyword id="KW-0963">Cytoplasm</keyword>
<keyword id="KW-0489">Methyltransferase</keyword>
<keyword id="KW-0698">rRNA processing</keyword>
<keyword id="KW-0949">S-adenosyl-L-methionine</keyword>
<keyword id="KW-0808">Transferase</keyword>
<gene>
    <name evidence="1" type="primary">rsmH</name>
    <name type="synonym">mraW</name>
    <name type="ordered locus">BOV_1396</name>
</gene>
<comment type="function">
    <text evidence="1">Specifically methylates the N4 position of cytidine in position 1402 (C1402) of 16S rRNA.</text>
</comment>
<comment type="catalytic activity">
    <reaction evidence="1">
        <text>cytidine(1402) in 16S rRNA + S-adenosyl-L-methionine = N(4)-methylcytidine(1402) in 16S rRNA + S-adenosyl-L-homocysteine + H(+)</text>
        <dbReference type="Rhea" id="RHEA:42928"/>
        <dbReference type="Rhea" id="RHEA-COMP:10286"/>
        <dbReference type="Rhea" id="RHEA-COMP:10287"/>
        <dbReference type="ChEBI" id="CHEBI:15378"/>
        <dbReference type="ChEBI" id="CHEBI:57856"/>
        <dbReference type="ChEBI" id="CHEBI:59789"/>
        <dbReference type="ChEBI" id="CHEBI:74506"/>
        <dbReference type="ChEBI" id="CHEBI:82748"/>
        <dbReference type="EC" id="2.1.1.199"/>
    </reaction>
</comment>
<comment type="subcellular location">
    <subcellularLocation>
        <location evidence="1">Cytoplasm</location>
    </subcellularLocation>
</comment>
<comment type="similarity">
    <text evidence="1">Belongs to the methyltransferase superfamily. RsmH family.</text>
</comment>
<dbReference type="EC" id="2.1.1.199" evidence="1"/>
<dbReference type="EMBL" id="CP000708">
    <property type="protein sequence ID" value="ABQ60687.1"/>
    <property type="molecule type" value="Genomic_DNA"/>
</dbReference>
<dbReference type="SMR" id="A5VRI5"/>
<dbReference type="KEGG" id="bov:BOV_1396"/>
<dbReference type="HOGENOM" id="CLU_038422_1_1_5"/>
<dbReference type="Proteomes" id="UP000006383">
    <property type="component" value="Chromosome I"/>
</dbReference>
<dbReference type="GO" id="GO:0005737">
    <property type="term" value="C:cytoplasm"/>
    <property type="evidence" value="ECO:0007669"/>
    <property type="project" value="UniProtKB-SubCell"/>
</dbReference>
<dbReference type="GO" id="GO:0071424">
    <property type="term" value="F:rRNA (cytosine-N4-)-methyltransferase activity"/>
    <property type="evidence" value="ECO:0007669"/>
    <property type="project" value="UniProtKB-UniRule"/>
</dbReference>
<dbReference type="GO" id="GO:0070475">
    <property type="term" value="P:rRNA base methylation"/>
    <property type="evidence" value="ECO:0007669"/>
    <property type="project" value="UniProtKB-UniRule"/>
</dbReference>
<dbReference type="CDD" id="cd02440">
    <property type="entry name" value="AdoMet_MTases"/>
    <property type="match status" value="1"/>
</dbReference>
<dbReference type="Gene3D" id="1.10.150.170">
    <property type="entry name" value="Putative methyltransferase TM0872, insert domain"/>
    <property type="match status" value="1"/>
</dbReference>
<dbReference type="Gene3D" id="3.40.50.150">
    <property type="entry name" value="Vaccinia Virus protein VP39"/>
    <property type="match status" value="1"/>
</dbReference>
<dbReference type="HAMAP" id="MF_01007">
    <property type="entry name" value="16SrRNA_methyltr_H"/>
    <property type="match status" value="1"/>
</dbReference>
<dbReference type="InterPro" id="IPR002903">
    <property type="entry name" value="RsmH"/>
</dbReference>
<dbReference type="InterPro" id="IPR023397">
    <property type="entry name" value="SAM-dep_MeTrfase_MraW_recog"/>
</dbReference>
<dbReference type="InterPro" id="IPR029063">
    <property type="entry name" value="SAM-dependent_MTases_sf"/>
</dbReference>
<dbReference type="NCBIfam" id="TIGR00006">
    <property type="entry name" value="16S rRNA (cytosine(1402)-N(4))-methyltransferase RsmH"/>
    <property type="match status" value="1"/>
</dbReference>
<dbReference type="PANTHER" id="PTHR11265:SF0">
    <property type="entry name" value="12S RRNA N4-METHYLCYTIDINE METHYLTRANSFERASE"/>
    <property type="match status" value="1"/>
</dbReference>
<dbReference type="PANTHER" id="PTHR11265">
    <property type="entry name" value="S-ADENOSYL-METHYLTRANSFERASE MRAW"/>
    <property type="match status" value="1"/>
</dbReference>
<dbReference type="Pfam" id="PF01795">
    <property type="entry name" value="Methyltransf_5"/>
    <property type="match status" value="1"/>
</dbReference>
<dbReference type="PIRSF" id="PIRSF004486">
    <property type="entry name" value="MraW"/>
    <property type="match status" value="1"/>
</dbReference>
<dbReference type="SUPFAM" id="SSF81799">
    <property type="entry name" value="Putative methyltransferase TM0872, insert domain"/>
    <property type="match status" value="1"/>
</dbReference>
<dbReference type="SUPFAM" id="SSF53335">
    <property type="entry name" value="S-adenosyl-L-methionine-dependent methyltransferases"/>
    <property type="match status" value="1"/>
</dbReference>
<name>RSMH_BRUO2</name>